<proteinExistence type="inferred from homology"/>
<keyword id="KW-1185">Reference proteome</keyword>
<keyword id="KW-0732">Signal</keyword>
<accession>Q6SW05</accession>
<accession>D2K3U6</accession>
<dbReference type="EMBL" id="AY446894">
    <property type="protein sequence ID" value="AAR31690.1"/>
    <property type="molecule type" value="Genomic_DNA"/>
</dbReference>
<dbReference type="RefSeq" id="YP_081586.1">
    <property type="nucleotide sequence ID" value="NC_006273.2"/>
</dbReference>
<dbReference type="GeneID" id="3077550"/>
<dbReference type="KEGG" id="vg:3077550"/>
<dbReference type="Proteomes" id="UP000000938">
    <property type="component" value="Segment"/>
</dbReference>
<organism>
    <name type="scientific">Human cytomegalovirus (strain Merlin)</name>
    <name type="common">HHV-5</name>
    <name type="synonym">Human herpesvirus 5</name>
    <dbReference type="NCBI Taxonomy" id="295027"/>
    <lineage>
        <taxon>Viruses</taxon>
        <taxon>Duplodnaviria</taxon>
        <taxon>Heunggongvirae</taxon>
        <taxon>Peploviricota</taxon>
        <taxon>Herviviricetes</taxon>
        <taxon>Herpesvirales</taxon>
        <taxon>Orthoherpesviridae</taxon>
        <taxon>Betaherpesvirinae</taxon>
        <taxon>Cytomegalovirus</taxon>
        <taxon>Cytomegalovirus humanbeta5</taxon>
        <taxon>Human cytomegalovirus</taxon>
    </lineage>
</organism>
<name>UL150_HCMVM</name>
<gene>
    <name type="primary">UL150</name>
</gene>
<reference key="1">
    <citation type="journal article" date="2004" name="J. Gen. Virol.">
        <title>Genetic content of wild-type human cytomegalovirus.</title>
        <authorList>
            <person name="Dolan A."/>
            <person name="Cunningham C."/>
            <person name="Hector R.D."/>
            <person name="Hassan-Walker A.F."/>
            <person name="Lee L."/>
            <person name="Addison C."/>
            <person name="Dargan D.J."/>
            <person name="McGeoch D.J."/>
            <person name="Gatherer D."/>
            <person name="Emery V.C."/>
            <person name="Griffiths P.D."/>
            <person name="Sinzger C."/>
            <person name="McSharry B.P."/>
            <person name="Wilkinson G.W.G."/>
            <person name="Davison A.J."/>
        </authorList>
    </citation>
    <scope>NUCLEOTIDE SEQUENCE [LARGE SCALE GENOMIC DNA]</scope>
</reference>
<protein>
    <recommendedName>
        <fullName>Uncharacterized protein UL150</fullName>
    </recommendedName>
</protein>
<sequence length="639" mass="70082">MLTLYLFTATCCFVCALPRQAQVDTAICHHTWPMCSDVPHPTSSAHNTALSSSHAISIEHRLLHSPSPPRENIRHSMRCRRRAIASSASTPVSHTQPLAANHRRSRITYATTDPTNSPTASPAKSDKLEADADPALHRRPDSLLRHLFQPCHAQRGTSNRATSQRASLNAVHHKLCGAMISSSWSTTCTPAIMDLPSLSVELSAGHKKKETPTEGGWGGEEGEDDVLATIRNTLSAPTSPAAATTHRLSFPEGSSFCLTAVSEYSQRLTSTAALTPPPPAVAAPFSFSSTVSETGAFPQSTAGRTRVDDTAVVTAGDPRSPVTHVTLLQIFRLRSSLLTSRSGDTLRGGEHEAIPKVASLFWTLLKATQTVEITHKTPSADSHRNPQKYTDRPQRLLLTALAIWQRTYNNTRADHAPQVRLLGNILTYRRPQTATASAKAHTQQQPEEPKGQQIWAQTAGQAAPHGDEPHSDGELRRESHSAPPTSRTLPDTILAVKRRSVAQRSHVRLDAKPGLNDRDGFRRRLLLPLSGYFRANELRNQQFMGYGTENGLKNTCLTRPLGAAGGVRETIGERQDRDVADSATQRVFHTLYAALQTVRVWYTALGTAWRTSGSRTRDSLFDGPRRRDRQAGRLRRLEL</sequence>
<organismHost>
    <name type="scientific">Homo sapiens</name>
    <name type="common">Human</name>
    <dbReference type="NCBI Taxonomy" id="9606"/>
</organismHost>
<feature type="signal peptide" evidence="1">
    <location>
        <begin position="1"/>
        <end position="16"/>
    </location>
</feature>
<feature type="chain" id="PRO_0000418304" description="Uncharacterized protein UL150">
    <location>
        <begin position="17"/>
        <end position="639"/>
    </location>
</feature>
<feature type="region of interest" description="Disordered" evidence="2">
    <location>
        <begin position="80"/>
        <end position="128"/>
    </location>
</feature>
<feature type="region of interest" description="Disordered" evidence="2">
    <location>
        <begin position="432"/>
        <end position="488"/>
    </location>
</feature>
<feature type="compositionally biased region" description="Polar residues" evidence="2">
    <location>
        <begin position="108"/>
        <end position="122"/>
    </location>
</feature>
<feature type="compositionally biased region" description="Polar residues" evidence="2">
    <location>
        <begin position="432"/>
        <end position="446"/>
    </location>
</feature>
<feature type="compositionally biased region" description="Basic and acidic residues" evidence="2">
    <location>
        <begin position="465"/>
        <end position="480"/>
    </location>
</feature>
<evidence type="ECO:0000255" key="1"/>
<evidence type="ECO:0000256" key="2">
    <source>
        <dbReference type="SAM" id="MobiDB-lite"/>
    </source>
</evidence>